<accession>Q56235</accession>
<accession>P77648</accession>
<accession>Q5SI83</accession>
<gene>
    <name type="primary">dnaK</name>
    <name type="ordered locus">TTHA1491</name>
</gene>
<comment type="function">
    <text evidence="3">Cooperates with DnaJ, GrpE and ClpB to reactivate heat-inactivated proteins.</text>
</comment>
<comment type="subunit">
    <text>Forms a heterononamer with DnaJ and DafA in the resting state. Three copies of each protein are present in the complex.</text>
</comment>
<comment type="induction">
    <text evidence="1">By stress conditions e.g. heat shock (By similarity).</text>
</comment>
<comment type="miscellaneous">
    <text>In the resting state, the DnaK-DnaJ-DafA complex cannot bind substrate. As the substrate becomes sufficiently high, DafA is displaced and an active DnaK-substrate-DnaJ complex is formed.</text>
</comment>
<comment type="similarity">
    <text evidence="4">Belongs to the heat shock protein 70 family.</text>
</comment>
<proteinExistence type="evidence at protein level"/>
<organism>
    <name type="scientific">Thermus thermophilus (strain ATCC 27634 / DSM 579 / HB8)</name>
    <dbReference type="NCBI Taxonomy" id="300852"/>
    <lineage>
        <taxon>Bacteria</taxon>
        <taxon>Thermotogati</taxon>
        <taxon>Deinococcota</taxon>
        <taxon>Deinococci</taxon>
        <taxon>Thermales</taxon>
        <taxon>Thermaceae</taxon>
        <taxon>Thermus</taxon>
    </lineage>
</organism>
<keyword id="KW-0002">3D-structure</keyword>
<keyword id="KW-0067">ATP-binding</keyword>
<keyword id="KW-0143">Chaperone</keyword>
<keyword id="KW-0547">Nucleotide-binding</keyword>
<keyword id="KW-0597">Phosphoprotein</keyword>
<keyword id="KW-1185">Reference proteome</keyword>
<keyword id="KW-0346">Stress response</keyword>
<name>DNAK_THET8</name>
<dbReference type="EMBL" id="L57504">
    <property type="protein sequence ID" value="AAB04676.1"/>
    <property type="molecule type" value="Genomic_DNA"/>
</dbReference>
<dbReference type="EMBL" id="Y07826">
    <property type="protein sequence ID" value="CAA69159.1"/>
    <property type="molecule type" value="Genomic_DNA"/>
</dbReference>
<dbReference type="EMBL" id="D84222">
    <property type="protein sequence ID" value="BAA12280.1"/>
    <property type="molecule type" value="Genomic_DNA"/>
</dbReference>
<dbReference type="EMBL" id="AB012390">
    <property type="protein sequence ID" value="BAA81741.1"/>
    <property type="molecule type" value="Genomic_DNA"/>
</dbReference>
<dbReference type="EMBL" id="AB032368">
    <property type="protein sequence ID" value="BAA96089.1"/>
    <property type="molecule type" value="Genomic_DNA"/>
</dbReference>
<dbReference type="EMBL" id="AP008226">
    <property type="protein sequence ID" value="BAD71314.1"/>
    <property type="molecule type" value="Genomic_DNA"/>
</dbReference>
<dbReference type="RefSeq" id="WP_011228715.1">
    <property type="nucleotide sequence ID" value="NC_006461.1"/>
</dbReference>
<dbReference type="RefSeq" id="YP_144757.1">
    <property type="nucleotide sequence ID" value="NC_006461.1"/>
</dbReference>
<dbReference type="PDB" id="6PRP">
    <property type="method" value="NMR"/>
    <property type="chains" value="A=604-615"/>
</dbReference>
<dbReference type="PDB" id="8W1M">
    <property type="method" value="X-ray"/>
    <property type="resolution" value="2.75 A"/>
    <property type="chains" value="A/B=1-382"/>
</dbReference>
<dbReference type="PDBsum" id="6PRP"/>
<dbReference type="PDBsum" id="8W1M"/>
<dbReference type="BMRB" id="Q56235"/>
<dbReference type="SMR" id="Q56235"/>
<dbReference type="EnsemblBacteria" id="BAD71314">
    <property type="protein sequence ID" value="BAD71314"/>
    <property type="gene ID" value="BAD71314"/>
</dbReference>
<dbReference type="GeneID" id="3167961"/>
<dbReference type="KEGG" id="ttj:TTHA1491"/>
<dbReference type="PATRIC" id="fig|300852.9.peg.1466"/>
<dbReference type="eggNOG" id="COG0443">
    <property type="taxonomic scope" value="Bacteria"/>
</dbReference>
<dbReference type="HOGENOM" id="CLU_005965_2_4_0"/>
<dbReference type="PhylomeDB" id="Q56235"/>
<dbReference type="Proteomes" id="UP000000532">
    <property type="component" value="Chromosome"/>
</dbReference>
<dbReference type="GO" id="GO:0005524">
    <property type="term" value="F:ATP binding"/>
    <property type="evidence" value="ECO:0007669"/>
    <property type="project" value="UniProtKB-UniRule"/>
</dbReference>
<dbReference type="GO" id="GO:0140662">
    <property type="term" value="F:ATP-dependent protein folding chaperone"/>
    <property type="evidence" value="ECO:0007669"/>
    <property type="project" value="InterPro"/>
</dbReference>
<dbReference type="GO" id="GO:0051082">
    <property type="term" value="F:unfolded protein binding"/>
    <property type="evidence" value="ECO:0007669"/>
    <property type="project" value="InterPro"/>
</dbReference>
<dbReference type="CDD" id="cd10234">
    <property type="entry name" value="ASKHA_NBD_HSP70_DnaK-like"/>
    <property type="match status" value="1"/>
</dbReference>
<dbReference type="FunFam" id="2.60.34.10:FF:000014">
    <property type="entry name" value="Chaperone protein DnaK HSP70"/>
    <property type="match status" value="1"/>
</dbReference>
<dbReference type="FunFam" id="3.30.30.30:FF:000005">
    <property type="entry name" value="Heat shock protein ssb1"/>
    <property type="match status" value="1"/>
</dbReference>
<dbReference type="FunFam" id="3.30.420.40:FF:000004">
    <property type="entry name" value="Molecular chaperone DnaK"/>
    <property type="match status" value="1"/>
</dbReference>
<dbReference type="FunFam" id="3.90.640.10:FF:000003">
    <property type="entry name" value="Molecular chaperone DnaK"/>
    <property type="match status" value="1"/>
</dbReference>
<dbReference type="Gene3D" id="3.30.420.40">
    <property type="match status" value="2"/>
</dbReference>
<dbReference type="Gene3D" id="3.90.640.10">
    <property type="entry name" value="Actin, Chain A, domain 4"/>
    <property type="match status" value="1"/>
</dbReference>
<dbReference type="Gene3D" id="2.60.34.10">
    <property type="entry name" value="Substrate Binding Domain Of DNAk, Chain A, domain 1"/>
    <property type="match status" value="1"/>
</dbReference>
<dbReference type="HAMAP" id="MF_00332">
    <property type="entry name" value="DnaK"/>
    <property type="match status" value="1"/>
</dbReference>
<dbReference type="InterPro" id="IPR043129">
    <property type="entry name" value="ATPase_NBD"/>
</dbReference>
<dbReference type="InterPro" id="IPR012725">
    <property type="entry name" value="Chaperone_DnaK"/>
</dbReference>
<dbReference type="InterPro" id="IPR018181">
    <property type="entry name" value="Heat_shock_70_CS"/>
</dbReference>
<dbReference type="InterPro" id="IPR029047">
    <property type="entry name" value="HSP70_peptide-bd_sf"/>
</dbReference>
<dbReference type="InterPro" id="IPR013126">
    <property type="entry name" value="Hsp_70_fam"/>
</dbReference>
<dbReference type="NCBIfam" id="NF001413">
    <property type="entry name" value="PRK00290.1"/>
    <property type="match status" value="1"/>
</dbReference>
<dbReference type="NCBIfam" id="NF003520">
    <property type="entry name" value="PRK05183.1"/>
    <property type="match status" value="1"/>
</dbReference>
<dbReference type="NCBIfam" id="TIGR02350">
    <property type="entry name" value="prok_dnaK"/>
    <property type="match status" value="1"/>
</dbReference>
<dbReference type="PANTHER" id="PTHR19375">
    <property type="entry name" value="HEAT SHOCK PROTEIN 70KDA"/>
    <property type="match status" value="1"/>
</dbReference>
<dbReference type="Pfam" id="PF00012">
    <property type="entry name" value="HSP70"/>
    <property type="match status" value="1"/>
</dbReference>
<dbReference type="PRINTS" id="PR00301">
    <property type="entry name" value="HEATSHOCK70"/>
</dbReference>
<dbReference type="SUPFAM" id="SSF53067">
    <property type="entry name" value="Actin-like ATPase domain"/>
    <property type="match status" value="2"/>
</dbReference>
<dbReference type="SUPFAM" id="SSF100920">
    <property type="entry name" value="Heat shock protein 70kD (HSP70), peptide-binding domain"/>
    <property type="match status" value="1"/>
</dbReference>
<dbReference type="PROSITE" id="PS00297">
    <property type="entry name" value="HSP70_1"/>
    <property type="match status" value="1"/>
</dbReference>
<dbReference type="PROSITE" id="PS00329">
    <property type="entry name" value="HSP70_2"/>
    <property type="match status" value="1"/>
</dbReference>
<dbReference type="PROSITE" id="PS01036">
    <property type="entry name" value="HSP70_3"/>
    <property type="match status" value="1"/>
</dbReference>
<protein>
    <recommendedName>
        <fullName>Chaperone protein DnaK</fullName>
    </recommendedName>
    <alternativeName>
        <fullName>HSP70</fullName>
    </alternativeName>
    <alternativeName>
        <fullName>Heat shock 70 kDa protein</fullName>
    </alternativeName>
    <alternativeName>
        <fullName>Heat shock protein 70</fullName>
    </alternativeName>
</protein>
<evidence type="ECO:0000250" key="1"/>
<evidence type="ECO:0000256" key="2">
    <source>
        <dbReference type="SAM" id="MobiDB-lite"/>
    </source>
</evidence>
<evidence type="ECO:0000269" key="3">
    <source>
    </source>
</evidence>
<evidence type="ECO:0000305" key="4"/>
<evidence type="ECO:0007829" key="5">
    <source>
        <dbReference type="PDB" id="6PRP"/>
    </source>
</evidence>
<feature type="chain" id="PRO_0000078574" description="Chaperone protein DnaK">
    <location>
        <begin position="1"/>
        <end position="615"/>
    </location>
</feature>
<feature type="region of interest" description="Disordered" evidence="2">
    <location>
        <begin position="592"/>
        <end position="615"/>
    </location>
</feature>
<feature type="modified residue" description="Phosphothreonine; by autocatalysis" evidence="1">
    <location>
        <position position="195"/>
    </location>
</feature>
<feature type="sequence conflict" description="In Ref. 1; AAB04676." evidence="4" ref="1">
    <original>NPDE</original>
    <variation>EPRTK</variation>
    <location>
        <begin position="360"/>
        <end position="363"/>
    </location>
</feature>
<feature type="strand" evidence="5">
    <location>
        <begin position="605"/>
        <end position="608"/>
    </location>
</feature>
<feature type="strand" evidence="5">
    <location>
        <begin position="610"/>
        <end position="615"/>
    </location>
</feature>
<reference key="1">
    <citation type="journal article" date="1997" name="Biochim. Biophys. Acta">
        <title>Cloning, sequencing, and expression of dnaK-operon proteins from the thermophilic bacterium Thermus thermophilus.</title>
        <authorList>
            <person name="Osipiuk J."/>
            <person name="Joachimiak A."/>
        </authorList>
    </citation>
    <scope>NUCLEOTIDE SEQUENCE [GENOMIC DNA]</scope>
</reference>
<reference key="2">
    <citation type="submission" date="1996-09" db="EMBL/GenBank/DDBJ databases">
        <authorList>
            <person name="Seidel R."/>
        </authorList>
    </citation>
    <scope>NUCLEOTIDE SEQUENCE [GENOMIC DNA]</scope>
</reference>
<reference key="3">
    <citation type="journal article" date="1997" name="FEBS Lett.">
        <title>K+ is an indispensable cofactor for GrpE stimulation of ATPase activity of DnaK/DnaJ complex from Thermus thermophilus.</title>
        <authorList>
            <person name="Motohashi K."/>
            <person name="Yohda M."/>
            <person name="Odaka M."/>
            <person name="Yoshida M."/>
        </authorList>
    </citation>
    <scope>NUCLEOTIDE SEQUENCE [GENOMIC DNA]</scope>
</reference>
<reference key="4">
    <citation type="submission" date="2004-11" db="EMBL/GenBank/DDBJ databases">
        <title>Complete genome sequence of Thermus thermophilus HB8.</title>
        <authorList>
            <person name="Masui R."/>
            <person name="Kurokawa K."/>
            <person name="Nakagawa N."/>
            <person name="Tokunaga F."/>
            <person name="Koyama Y."/>
            <person name="Shibata T."/>
            <person name="Oshima T."/>
            <person name="Yokoyama S."/>
            <person name="Yasunaga T."/>
            <person name="Kuramitsu S."/>
        </authorList>
    </citation>
    <scope>NUCLEOTIDE SEQUENCE [LARGE SCALE GENOMIC DNA]</scope>
    <source>
        <strain>ATCC 27634 / DSM 579 / HB8</strain>
    </source>
</reference>
<reference key="5">
    <citation type="journal article" date="1999" name="Proc. Natl. Acad. Sci. U.S.A.">
        <title>Heat-inactivated proteins are rescued by the DnaK/J-GrpE set and ClpB chaperones.</title>
        <authorList>
            <person name="Motohashi K."/>
            <person name="Watanabe Y.H."/>
            <person name="Yohda M."/>
            <person name="Yoshida M."/>
        </authorList>
    </citation>
    <scope>FUNCTION</scope>
</reference>
<reference key="6">
    <citation type="journal article" date="1999" name="J. Mol. Biol.">
        <title>The functional cycle and regulation of the Thermus thermophilus DnaK chaperone system.</title>
        <authorList>
            <person name="Klostermeier D."/>
            <person name="Seidel R."/>
            <person name="Reinstein J."/>
        </authorList>
    </citation>
    <scope>REGULATION OF THE DNAK CHAPERONE SYSTEM</scope>
</reference>
<sequence>MAKAVGIDLGTTNSVIAVLEGGKPVVLENAEGERVTPSVVAFRDGETLVGRMAKRQAVLNPEGTIFEIKRFIGRRFEEVQEEAKRVPYKVVPGPDGGVRVEVKGKLYTPEEISAMILRKLVEDASKKLGEKITKAVITVPAYFNNAQREATANAGRIAGLEVLRIINEPTAAALAYGLDKKGNETVLVFDLGGGTFDVTILEIGEGVFEVKATSGDTHLGGSDMDHAIVNWLAEEFKKEHGVDLKADRQALQRLIEAAEKAKIELSSTLETTISLPFIALDPASKTPLHLEKKLTRAKFEELIQPLLKRLRGPVEQALKDAGLTPAQIDEVILVGGATRVPAVQQVVRELLGKEPNRSVNPDEVVAMGAAIQAGVLMGEVRDVVLLDVTPLSLGVETKGGVMTVLIPRNTTIPTRKCEIFTTAEHNQTAVEIHVLQGERPMAQDNKSLGRFRLEGIPPMPAGVPQIEVCFDIDANGILHVTAKERSTGREASITIQNTTTLSEEEIQRIIEEAKRHAEEDRRRREHAELKNALDSARVQAERVLQERQGAPEARARLEAAIGKAKELVERDAPDPELKAATEELLKAVEEYEKGAQAASGKGPDDVIDADYKPAD</sequence>